<reference evidence="11" key="1">
    <citation type="journal article" date="2002" name="J. Biol. Chem.">
        <title>The Caenorhabditis elegans ADAMTS family gene adt-1 is necessary for morphogenesis of the male copulatory organs.</title>
        <authorList>
            <person name="Kuno K."/>
            <person name="Baba C."/>
            <person name="Asaka A."/>
            <person name="Matsushima C."/>
            <person name="Matsushima K."/>
            <person name="Hosono R."/>
        </authorList>
    </citation>
    <scope>NUCLEOTIDE SEQUENCE [MRNA]</scope>
    <scope>FUNCTION</scope>
    <scope>TISSUE SPECIFICITY</scope>
</reference>
<reference evidence="12" key="2">
    <citation type="journal article" date="1998" name="Science">
        <title>Genome sequence of the nematode C. elegans: a platform for investigating biology.</title>
        <authorList>
            <consortium name="The C. elegans sequencing consortium"/>
        </authorList>
    </citation>
    <scope>NUCLEOTIDE SEQUENCE [LARGE SCALE GENOMIC DNA]</scope>
    <source>
        <strain evidence="12">Bristol N2</strain>
    </source>
</reference>
<accession>G5ECS8</accession>
<gene>
    <name evidence="9 13" type="primary">adt-1</name>
    <name evidence="13" type="ORF">C02B4.1</name>
</gene>
<dbReference type="EC" id="3.4.24.-" evidence="2"/>
<dbReference type="EMBL" id="AB066246">
    <property type="protein sequence ID" value="BAC05514.1"/>
    <property type="molecule type" value="mRNA"/>
</dbReference>
<dbReference type="EMBL" id="BX284606">
    <property type="protein sequence ID" value="CAA90293.2"/>
    <property type="molecule type" value="Genomic_DNA"/>
</dbReference>
<dbReference type="PIR" id="T18856">
    <property type="entry name" value="T18856"/>
</dbReference>
<dbReference type="RefSeq" id="NP_510116.2">
    <property type="nucleotide sequence ID" value="NM_077715.4"/>
</dbReference>
<dbReference type="SMR" id="G5ECS8"/>
<dbReference type="FunCoup" id="G5ECS8">
    <property type="interactions" value="402"/>
</dbReference>
<dbReference type="STRING" id="6239.C02B4.1.1"/>
<dbReference type="MEROPS" id="M12.302"/>
<dbReference type="GlyCosmos" id="G5ECS8">
    <property type="glycosylation" value="2 sites, No reported glycans"/>
</dbReference>
<dbReference type="PaxDb" id="6239-C02B4.1"/>
<dbReference type="EnsemblMetazoa" id="C02B4.1a.1">
    <property type="protein sequence ID" value="C02B4.1a.1"/>
    <property type="gene ID" value="WBGene00000082"/>
</dbReference>
<dbReference type="GeneID" id="181412"/>
<dbReference type="KEGG" id="cel:CELE_C02B4.1"/>
<dbReference type="AGR" id="WB:WBGene00000082"/>
<dbReference type="CTD" id="181412"/>
<dbReference type="WormBase" id="C02B4.1a">
    <property type="protein sequence ID" value="CE31872"/>
    <property type="gene ID" value="WBGene00000082"/>
    <property type="gene designation" value="adt-1"/>
</dbReference>
<dbReference type="eggNOG" id="KOG3538">
    <property type="taxonomic scope" value="Eukaryota"/>
</dbReference>
<dbReference type="HOGENOM" id="CLU_004934_0_0_1"/>
<dbReference type="InParanoid" id="G5ECS8"/>
<dbReference type="OMA" id="ICELVGC"/>
<dbReference type="OrthoDB" id="10035764at2759"/>
<dbReference type="PhylomeDB" id="G5ECS8"/>
<dbReference type="PRO" id="PR:G5ECS8"/>
<dbReference type="Proteomes" id="UP000001940">
    <property type="component" value="Chromosome X"/>
</dbReference>
<dbReference type="Bgee" id="WBGene00000082">
    <property type="expression patterns" value="Expressed in embryo and 3 other cell types or tissues"/>
</dbReference>
<dbReference type="ExpressionAtlas" id="G5ECS8">
    <property type="expression patterns" value="baseline and differential"/>
</dbReference>
<dbReference type="GO" id="GO:0031012">
    <property type="term" value="C:extracellular matrix"/>
    <property type="evidence" value="ECO:0000318"/>
    <property type="project" value="GO_Central"/>
</dbReference>
<dbReference type="GO" id="GO:0005576">
    <property type="term" value="C:extracellular region"/>
    <property type="evidence" value="ECO:0007669"/>
    <property type="project" value="UniProtKB-SubCell"/>
</dbReference>
<dbReference type="GO" id="GO:0046872">
    <property type="term" value="F:metal ion binding"/>
    <property type="evidence" value="ECO:0007669"/>
    <property type="project" value="UniProtKB-KW"/>
</dbReference>
<dbReference type="GO" id="GO:0004222">
    <property type="term" value="F:metalloendopeptidase activity"/>
    <property type="evidence" value="ECO:0000318"/>
    <property type="project" value="GO_Central"/>
</dbReference>
<dbReference type="GO" id="GO:0030198">
    <property type="term" value="P:extracellular matrix organization"/>
    <property type="evidence" value="ECO:0000318"/>
    <property type="project" value="GO_Central"/>
</dbReference>
<dbReference type="GO" id="GO:0006508">
    <property type="term" value="P:proteolysis"/>
    <property type="evidence" value="ECO:0000318"/>
    <property type="project" value="GO_Central"/>
</dbReference>
<dbReference type="CDD" id="cd04273">
    <property type="entry name" value="ZnMc_ADAMTS_like"/>
    <property type="match status" value="1"/>
</dbReference>
<dbReference type="FunFam" id="2.20.100.10:FF:000001">
    <property type="entry name" value="semaphorin-5A isoform X1"/>
    <property type="match status" value="3"/>
</dbReference>
<dbReference type="Gene3D" id="3.40.1620.60">
    <property type="match status" value="1"/>
</dbReference>
<dbReference type="Gene3D" id="3.40.390.10">
    <property type="entry name" value="Collagenase (Catalytic Domain)"/>
    <property type="match status" value="1"/>
</dbReference>
<dbReference type="Gene3D" id="2.20.100.10">
    <property type="entry name" value="Thrombospondin type-1 (TSP1) repeat"/>
    <property type="match status" value="12"/>
</dbReference>
<dbReference type="InterPro" id="IPR050439">
    <property type="entry name" value="ADAMTS_ADAMTS-like"/>
</dbReference>
<dbReference type="InterPro" id="IPR041645">
    <property type="entry name" value="ADAMTS_CR_2"/>
</dbReference>
<dbReference type="InterPro" id="IPR024079">
    <property type="entry name" value="MetalloPept_cat_dom_sf"/>
</dbReference>
<dbReference type="InterPro" id="IPR001590">
    <property type="entry name" value="Peptidase_M12B"/>
</dbReference>
<dbReference type="InterPro" id="IPR002870">
    <property type="entry name" value="Peptidase_M12B_N"/>
</dbReference>
<dbReference type="InterPro" id="IPR000884">
    <property type="entry name" value="TSP1_rpt"/>
</dbReference>
<dbReference type="InterPro" id="IPR036383">
    <property type="entry name" value="TSP1_rpt_sf"/>
</dbReference>
<dbReference type="PANTHER" id="PTHR13723">
    <property type="entry name" value="ADAMTS A DISINTEGRIN AND METALLOPROTEASE WITH THROMBOSPONDIN MOTIFS PROTEASE"/>
    <property type="match status" value="1"/>
</dbReference>
<dbReference type="PANTHER" id="PTHR13723:SF281">
    <property type="entry name" value="PAPILIN"/>
    <property type="match status" value="1"/>
</dbReference>
<dbReference type="Pfam" id="PF17771">
    <property type="entry name" value="ADAMTS_CR_2"/>
    <property type="match status" value="1"/>
</dbReference>
<dbReference type="Pfam" id="PF25379">
    <property type="entry name" value="Adt-1"/>
    <property type="match status" value="1"/>
</dbReference>
<dbReference type="Pfam" id="PF01562">
    <property type="entry name" value="Pep_M12B_propep"/>
    <property type="match status" value="1"/>
</dbReference>
<dbReference type="Pfam" id="PF01421">
    <property type="entry name" value="Reprolysin"/>
    <property type="match status" value="1"/>
</dbReference>
<dbReference type="Pfam" id="PF00090">
    <property type="entry name" value="TSP_1"/>
    <property type="match status" value="12"/>
</dbReference>
<dbReference type="PRINTS" id="PR01705">
    <property type="entry name" value="TSP1REPEAT"/>
</dbReference>
<dbReference type="SMART" id="SM00209">
    <property type="entry name" value="TSP1"/>
    <property type="match status" value="13"/>
</dbReference>
<dbReference type="SUPFAM" id="SSF55486">
    <property type="entry name" value="Metalloproteases ('zincins'), catalytic domain"/>
    <property type="match status" value="1"/>
</dbReference>
<dbReference type="SUPFAM" id="SSF82895">
    <property type="entry name" value="TSP-1 type 1 repeat"/>
    <property type="match status" value="12"/>
</dbReference>
<dbReference type="PROSITE" id="PS50215">
    <property type="entry name" value="ADAM_MEPRO"/>
    <property type="match status" value="1"/>
</dbReference>
<dbReference type="PROSITE" id="PS50092">
    <property type="entry name" value="TSP1"/>
    <property type="match status" value="12"/>
</dbReference>
<dbReference type="PROSITE" id="PS00142">
    <property type="entry name" value="ZINC_PROTEASE"/>
    <property type="match status" value="1"/>
</dbReference>
<comment type="function">
    <text evidence="8">Plays a role in ray morphogenesis in the male tail, probably by remodeling the extracellular matrix (ECM) in the cuticle.</text>
</comment>
<comment type="cofactor">
    <cofactor evidence="3">
        <name>Zn(2+)</name>
        <dbReference type="ChEBI" id="CHEBI:29105"/>
    </cofactor>
    <text evidence="3">Binds 1 zinc ion per subunit.</text>
</comment>
<comment type="subcellular location">
    <subcellularLocation>
        <location evidence="10">Secreted</location>
    </subcellularLocation>
</comment>
<comment type="tissue specificity">
    <text evidence="8">In hermaphrodites, expressed in the vulva, head ganglia, ventral nerve cord and amphid neurons. Expressed in the rays of the male tail.</text>
</comment>
<comment type="domain">
    <text evidence="1">The conserved cysteine present in the cysteine-switch motif binds the catalytic zinc ion, thus inhibiting the enzyme. The dissociation of the cysteine from the zinc ion upon the activation-peptide release activates the enzyme.</text>
</comment>
<protein>
    <recommendedName>
        <fullName evidence="10">A disintegrin and metalloproteinase with thrombospondin motifs adt-1</fullName>
        <shortName evidence="10">ADAMTS adt-1</shortName>
        <ecNumber evidence="2">3.4.24.-</ecNumber>
    </recommendedName>
</protein>
<evidence type="ECO:0000250" key="1">
    <source>
        <dbReference type="UniProtKB" id="P03956"/>
    </source>
</evidence>
<evidence type="ECO:0000250" key="2">
    <source>
        <dbReference type="UniProtKB" id="Q9P2N4"/>
    </source>
</evidence>
<evidence type="ECO:0000250" key="3">
    <source>
        <dbReference type="UniProtKB" id="Q9UHI8"/>
    </source>
</evidence>
<evidence type="ECO:0000255" key="4"/>
<evidence type="ECO:0000255" key="5">
    <source>
        <dbReference type="PROSITE-ProRule" id="PRU00210"/>
    </source>
</evidence>
<evidence type="ECO:0000255" key="6">
    <source>
        <dbReference type="PROSITE-ProRule" id="PRU00276"/>
    </source>
</evidence>
<evidence type="ECO:0000255" key="7">
    <source>
        <dbReference type="PROSITE-ProRule" id="PRU00498"/>
    </source>
</evidence>
<evidence type="ECO:0000269" key="8">
    <source>
    </source>
</evidence>
<evidence type="ECO:0000303" key="9">
    <source>
    </source>
</evidence>
<evidence type="ECO:0000305" key="10"/>
<evidence type="ECO:0000312" key="11">
    <source>
        <dbReference type="EMBL" id="BAC05514.1"/>
    </source>
</evidence>
<evidence type="ECO:0000312" key="12">
    <source>
        <dbReference type="Proteomes" id="UP000001940"/>
    </source>
</evidence>
<evidence type="ECO:0000312" key="13">
    <source>
        <dbReference type="WormBase" id="C02B4.1a"/>
    </source>
</evidence>
<keyword id="KW-1015">Disulfide bond</keyword>
<keyword id="KW-0325">Glycoprotein</keyword>
<keyword id="KW-0378">Hydrolase</keyword>
<keyword id="KW-0479">Metal-binding</keyword>
<keyword id="KW-0482">Metalloprotease</keyword>
<keyword id="KW-0645">Protease</keyword>
<keyword id="KW-1185">Reference proteome</keyword>
<keyword id="KW-0677">Repeat</keyword>
<keyword id="KW-0964">Secreted</keyword>
<keyword id="KW-0732">Signal</keyword>
<keyword id="KW-0862">Zinc</keyword>
<keyword id="KW-0865">Zymogen</keyword>
<feature type="signal peptide" evidence="4">
    <location>
        <begin position="1"/>
        <end position="21"/>
    </location>
</feature>
<feature type="propeptide" id="PRO_0000440900" evidence="4">
    <location>
        <begin position="22"/>
        <end position="163"/>
    </location>
</feature>
<feature type="chain" id="PRO_0000440951" description="A disintegrin and metalloproteinase with thrombospondin motifs adt-1" evidence="4">
    <location>
        <begin position="164"/>
        <end position="1461"/>
    </location>
</feature>
<feature type="domain" description="Peptidase M12B" evidence="6">
    <location>
        <begin position="233"/>
        <end position="435"/>
    </location>
</feature>
<feature type="domain" description="Disintegrin" evidence="10">
    <location>
        <begin position="464"/>
        <end position="546"/>
    </location>
</feature>
<feature type="domain" description="TSP type-1 1" evidence="5">
    <location>
        <begin position="708"/>
        <end position="759"/>
    </location>
</feature>
<feature type="domain" description="TSP type-1 2" evidence="5">
    <location>
        <begin position="761"/>
        <end position="802"/>
    </location>
</feature>
<feature type="domain" description="TSP type-1 3" evidence="5">
    <location>
        <begin position="804"/>
        <end position="852"/>
    </location>
</feature>
<feature type="domain" description="TSP type-1 4" evidence="5">
    <location>
        <begin position="853"/>
        <end position="898"/>
    </location>
</feature>
<feature type="domain" description="TSP type-1 5" evidence="5">
    <location>
        <begin position="903"/>
        <end position="952"/>
    </location>
</feature>
<feature type="domain" description="TSP type-1 6" evidence="4">
    <location>
        <begin position="955"/>
        <end position="1000"/>
    </location>
</feature>
<feature type="domain" description="TSP type-1 7" evidence="5">
    <location>
        <begin position="1035"/>
        <end position="1083"/>
    </location>
</feature>
<feature type="domain" description="TSP type-1 8" evidence="5">
    <location>
        <begin position="1087"/>
        <end position="1133"/>
    </location>
</feature>
<feature type="domain" description="TSP type-1 9" evidence="5">
    <location>
        <begin position="1148"/>
        <end position="1200"/>
    </location>
</feature>
<feature type="domain" description="TSP type-1 10" evidence="5">
    <location>
        <begin position="1203"/>
        <end position="1260"/>
    </location>
</feature>
<feature type="domain" description="TSP type-1 11" evidence="5">
    <location>
        <begin position="1265"/>
        <end position="1321"/>
    </location>
</feature>
<feature type="domain" description="TSP type-1 12" evidence="5">
    <location>
        <begin position="1324"/>
        <end position="1378"/>
    </location>
</feature>
<feature type="domain" description="TSP type-1 13" evidence="5">
    <location>
        <begin position="1382"/>
        <end position="1435"/>
    </location>
</feature>
<feature type="short sequence motif" description="Cysteine switch" evidence="1">
    <location>
        <begin position="190"/>
        <end position="197"/>
    </location>
</feature>
<feature type="active site" evidence="6">
    <location>
        <position position="389"/>
    </location>
</feature>
<feature type="binding site" evidence="6">
    <location>
        <position position="388"/>
    </location>
    <ligand>
        <name>Zn(2+)</name>
        <dbReference type="ChEBI" id="CHEBI:29105"/>
        <note>catalytic</note>
    </ligand>
</feature>
<feature type="binding site" evidence="6">
    <location>
        <position position="392"/>
    </location>
    <ligand>
        <name>Zn(2+)</name>
        <dbReference type="ChEBI" id="CHEBI:29105"/>
        <note>catalytic</note>
    </ligand>
</feature>
<feature type="binding site" evidence="6">
    <location>
        <position position="398"/>
    </location>
    <ligand>
        <name>Zn(2+)</name>
        <dbReference type="ChEBI" id="CHEBI:29105"/>
        <note>catalytic</note>
    </ligand>
</feature>
<feature type="glycosylation site" description="N-linked (GlcNAc...) asparagine" evidence="7">
    <location>
        <position position="69"/>
    </location>
</feature>
<feature type="glycosylation site" description="N-linked (GlcNAc...) asparagine" evidence="7">
    <location>
        <position position="212"/>
    </location>
</feature>
<feature type="disulfide bond" evidence="6">
    <location>
        <begin position="405"/>
        <end position="410"/>
    </location>
</feature>
<feature type="disulfide bond" evidence="5">
    <location>
        <begin position="719"/>
        <end position="751"/>
    </location>
</feature>
<feature type="disulfide bond" evidence="5">
    <location>
        <begin position="723"/>
        <end position="758"/>
    </location>
</feature>
<feature type="disulfide bond" evidence="5">
    <location>
        <begin position="735"/>
        <end position="741"/>
    </location>
</feature>
<feature type="disulfide bond" evidence="5">
    <location>
        <begin position="816"/>
        <end position="846"/>
    </location>
</feature>
<feature type="disulfide bond" evidence="5">
    <location>
        <begin position="820"/>
        <end position="851"/>
    </location>
</feature>
<feature type="disulfide bond" evidence="5">
    <location>
        <begin position="831"/>
        <end position="836"/>
    </location>
</feature>
<feature type="disulfide bond" evidence="5">
    <location>
        <begin position="862"/>
        <end position="892"/>
    </location>
</feature>
<feature type="disulfide bond" evidence="5">
    <location>
        <begin position="866"/>
        <end position="897"/>
    </location>
</feature>
<feature type="disulfide bond" evidence="5">
    <location>
        <begin position="877"/>
        <end position="882"/>
    </location>
</feature>
<feature type="disulfide bond" evidence="5">
    <location>
        <begin position="1047"/>
        <end position="1077"/>
    </location>
</feature>
<feature type="disulfide bond" evidence="5">
    <location>
        <begin position="1051"/>
        <end position="1082"/>
    </location>
</feature>
<feature type="disulfide bond" evidence="5">
    <location>
        <begin position="1062"/>
        <end position="1067"/>
    </location>
</feature>
<feature type="disulfide bond" evidence="5">
    <location>
        <begin position="1160"/>
        <end position="1194"/>
    </location>
</feature>
<feature type="disulfide bond" evidence="5">
    <location>
        <begin position="1162"/>
        <end position="1199"/>
    </location>
</feature>
<feature type="disulfide bond" evidence="5">
    <location>
        <begin position="1173"/>
        <end position="1184"/>
    </location>
</feature>
<feature type="disulfide bond" evidence="5">
    <location>
        <begin position="1215"/>
        <end position="1253"/>
    </location>
</feature>
<feature type="disulfide bond" evidence="5">
    <location>
        <begin position="1219"/>
        <end position="1259"/>
    </location>
</feature>
<feature type="disulfide bond" evidence="5">
    <location>
        <begin position="1231"/>
        <end position="1243"/>
    </location>
</feature>
<feature type="disulfide bond" evidence="5">
    <location>
        <begin position="1277"/>
        <end position="1314"/>
    </location>
</feature>
<feature type="disulfide bond" evidence="5">
    <location>
        <begin position="1281"/>
        <end position="1320"/>
    </location>
</feature>
<feature type="disulfide bond" evidence="5">
    <location>
        <begin position="1292"/>
        <end position="1304"/>
    </location>
</feature>
<feature type="disulfide bond" evidence="5">
    <location>
        <begin position="1336"/>
        <end position="1372"/>
    </location>
</feature>
<feature type="disulfide bond" evidence="5">
    <location>
        <begin position="1340"/>
        <end position="1377"/>
    </location>
</feature>
<feature type="disulfide bond" evidence="5">
    <location>
        <begin position="1351"/>
        <end position="1362"/>
    </location>
</feature>
<sequence>MPPFYIVITFLLSTVFRISQSVHHHLNEEELKQVFGVSNKHDVPEYSLIEATRHPLKNGNLKMKFTAWNDTYHLNLRKNSRIVSPHIISVVRHGDDDVTTYAGLRDYEQCHYQGEVKSHGNMKAAISDCGALMGSIVMEDHFLVLQTLPKRVHHLQKERHLVYKRSAGLLTNAESKIREEITRLQEEQESFCDTSEQLDDPAMTIPAHLHFNYTIPTSAQLDSSFIFPNMDPITLEIGLFLDSKLFEHFEREYIQDAEQHLLEFSLALINNVHVLYQQDTLTPNLDIVIVRYEMWRTQPSALSTGVHKNGQAQSLLDAFCRYQAHMNPGTDLTDMNHYDHGVLLTGYDIYHTTTSVAGVAPVARMCDPLFACSLVEGLHLGRSFVLAHEMGHNMGMVHDGVQNQCNKGCCLMSAVNGAGKTTWSDCSVREFNAFLLQLDESGRGNCLRDASPGLISTNHLSDLRLPGQRFTADQQCSYFWGRDYKVEIPNGKAMDDICRILWCGNSGSTISTAHPALEGSWCGANKWCHKGQCTHWTFGLTPVPIDGEWSEWGGAEKGCPIQQCAVSGSITVQGQHRDCVNPAPNNGGKTCEGANIRGIVCGATSSNCLGFTREEFGNKICSSIKYDPHKPDQQLTGEGFEHSTQPCRVWCHLIGSELIRNKGQFPDGTPCGFDAYCVGGQCLALSCDNKALVEQPEDCPRIEGRSVHQWEEWSSWSECSVSCGLGGREVRERKCSSGRKCQGVSEESRPCEGVLRDCEEFGEWKEWGSCSEKCALGVQKRFRPCLTDQCSSKHLQEERPCDNEGCWTNWDEWSSCSQSCGGGRRYRIRKCLDDKCDGDDLEKESCNTQKCISQSWGDWLPCSVSCGIGFQIRERLCDGELCATANKQARTCNQQQCPSAFSLSVWSEWGEWTTCSATCGEGLQSRERSCRRGSCTEDDASQTRRCVNGPCEHSYLTWSEWTTCETCSSFDSRKRIAKCDGTTENCQDKIDEETCDIACLREKHSFGPISPRRPKLITSNDLRKAFGRPLLPIESIHSEKWSEWGPCSVTCGSGRRVRTRGCQEASCPEQHIQTEECNLNSCLELFIWSDWSSCSKSCGQDGIQTRQKLCLFNNAECSSYAESRRCKDLPSCSSISSGRTISENGFDAPRWSEWSSWSACSCFSLTSTRRRFCQVVDPTVQGFCAGAILEQIPCAPGSCSPSAGGWSLWSEWSSCSKDCGDTGHQIRNRMCSEPIPSNRGAYCSGYSFDQRPCVMDNVCSDEKVDGGWTDWTAWSECTDYCRNGHRSRTRFCANPKPSQGGAQCTGSDFELNPCFDPARCHLRDGGWSTWSDWTPCSASCGFGVQTRDRSCSSPEPKGGQSCSGLAHQTSLCDLPACDHESDGEWSAWNEWSGCMGNCGIGTRTRVRACVSPPVSDGGQPCFGRSSEITECRQSPSTALCSSFITSSHLADGYFIDTDQQQ</sequence>
<name>ADT1_CAEEL</name>
<proteinExistence type="evidence at transcript level"/>
<organism evidence="11">
    <name type="scientific">Caenorhabditis elegans</name>
    <dbReference type="NCBI Taxonomy" id="6239"/>
    <lineage>
        <taxon>Eukaryota</taxon>
        <taxon>Metazoa</taxon>
        <taxon>Ecdysozoa</taxon>
        <taxon>Nematoda</taxon>
        <taxon>Chromadorea</taxon>
        <taxon>Rhabditida</taxon>
        <taxon>Rhabditina</taxon>
        <taxon>Rhabditomorpha</taxon>
        <taxon>Rhabditoidea</taxon>
        <taxon>Rhabditidae</taxon>
        <taxon>Peloderinae</taxon>
        <taxon>Caenorhabditis</taxon>
    </lineage>
</organism>